<evidence type="ECO:0000255" key="1">
    <source>
        <dbReference type="HAMAP-Rule" id="MF_00364"/>
    </source>
</evidence>
<evidence type="ECO:0000256" key="2">
    <source>
        <dbReference type="SAM" id="MobiDB-lite"/>
    </source>
</evidence>
<name>NAGZ_SALG2</name>
<reference key="1">
    <citation type="journal article" date="2008" name="Genome Res.">
        <title>Comparative genome analysis of Salmonella enteritidis PT4 and Salmonella gallinarum 287/91 provides insights into evolutionary and host adaptation pathways.</title>
        <authorList>
            <person name="Thomson N.R."/>
            <person name="Clayton D.J."/>
            <person name="Windhorst D."/>
            <person name="Vernikos G."/>
            <person name="Davidson S."/>
            <person name="Churcher C."/>
            <person name="Quail M.A."/>
            <person name="Stevens M."/>
            <person name="Jones M.A."/>
            <person name="Watson M."/>
            <person name="Barron A."/>
            <person name="Layton A."/>
            <person name="Pickard D."/>
            <person name="Kingsley R.A."/>
            <person name="Bignell A."/>
            <person name="Clark L."/>
            <person name="Harris B."/>
            <person name="Ormond D."/>
            <person name="Abdellah Z."/>
            <person name="Brooks K."/>
            <person name="Cherevach I."/>
            <person name="Chillingworth T."/>
            <person name="Woodward J."/>
            <person name="Norberczak H."/>
            <person name="Lord A."/>
            <person name="Arrowsmith C."/>
            <person name="Jagels K."/>
            <person name="Moule S."/>
            <person name="Mungall K."/>
            <person name="Saunders M."/>
            <person name="Whitehead S."/>
            <person name="Chabalgoity J.A."/>
            <person name="Maskell D."/>
            <person name="Humphreys T."/>
            <person name="Roberts M."/>
            <person name="Barrow P.A."/>
            <person name="Dougan G."/>
            <person name="Parkhill J."/>
        </authorList>
    </citation>
    <scope>NUCLEOTIDE SEQUENCE [LARGE SCALE GENOMIC DNA]</scope>
    <source>
        <strain>287/91 / NCTC 13346</strain>
    </source>
</reference>
<organism>
    <name type="scientific">Salmonella gallinarum (strain 287/91 / NCTC 13346)</name>
    <dbReference type="NCBI Taxonomy" id="550538"/>
    <lineage>
        <taxon>Bacteria</taxon>
        <taxon>Pseudomonadati</taxon>
        <taxon>Pseudomonadota</taxon>
        <taxon>Gammaproteobacteria</taxon>
        <taxon>Enterobacterales</taxon>
        <taxon>Enterobacteriaceae</taxon>
        <taxon>Salmonella</taxon>
    </lineage>
</organism>
<accession>B5RB93</accession>
<keyword id="KW-0131">Cell cycle</keyword>
<keyword id="KW-0132">Cell division</keyword>
<keyword id="KW-0133">Cell shape</keyword>
<keyword id="KW-0961">Cell wall biogenesis/degradation</keyword>
<keyword id="KW-0963">Cytoplasm</keyword>
<keyword id="KW-0326">Glycosidase</keyword>
<keyword id="KW-0378">Hydrolase</keyword>
<keyword id="KW-0573">Peptidoglycan synthesis</keyword>
<proteinExistence type="inferred from homology"/>
<feature type="chain" id="PRO_1000121070" description="Beta-hexosaminidase">
    <location>
        <begin position="1"/>
        <end position="341"/>
    </location>
</feature>
<feature type="region of interest" description="Disordered" evidence="2">
    <location>
        <begin position="170"/>
        <end position="189"/>
    </location>
</feature>
<feature type="compositionally biased region" description="Basic and acidic residues" evidence="2">
    <location>
        <begin position="174"/>
        <end position="189"/>
    </location>
</feature>
<feature type="active site" description="Proton donor/acceptor" evidence="1">
    <location>
        <position position="176"/>
    </location>
</feature>
<feature type="active site" description="Nucleophile" evidence="1">
    <location>
        <position position="248"/>
    </location>
</feature>
<feature type="binding site" evidence="1">
    <location>
        <position position="62"/>
    </location>
    <ligand>
        <name>substrate</name>
    </ligand>
</feature>
<feature type="binding site" evidence="1">
    <location>
        <position position="70"/>
    </location>
    <ligand>
        <name>substrate</name>
    </ligand>
</feature>
<feature type="binding site" evidence="1">
    <location>
        <position position="133"/>
    </location>
    <ligand>
        <name>substrate</name>
    </ligand>
</feature>
<feature type="binding site" evidence="1">
    <location>
        <begin position="163"/>
        <end position="164"/>
    </location>
    <ligand>
        <name>substrate</name>
    </ligand>
</feature>
<feature type="site" description="Important for catalytic activity" evidence="1">
    <location>
        <position position="174"/>
    </location>
</feature>
<sequence length="341" mass="37698">MGPVMLNVEGCELDAEEREILAHPLVGGLILFTRNYHDPEQLRELVRQIRAASRNHLVVAVDQEGGRVQRFREGFTRLPAAQSFFALHGLEEGGRLAQEAGWLMASEMIAMDIDISFAPVLDVGHISAAIGERSYHADPAKALAMATRFIDGMHDAGMKTTGKHFPGHGAVTADSHKETPCDPRPETDIRGKDMSVFRTLISENKLDAIMPAHVIYRAIDPRPASGSPYWLKTVLRQELGFDGVIFSDDLSMEGAAIMGSYAERAQASLDAGCDMILVCNNRKGAVSVLDNLSPIKAERVTRLYHKGSFSRRELMDSARWKTASAQLNQLHERWQEEKAGH</sequence>
<dbReference type="EC" id="3.2.1.52" evidence="1"/>
<dbReference type="EMBL" id="AM933173">
    <property type="protein sequence ID" value="CAR37764.1"/>
    <property type="molecule type" value="Genomic_DNA"/>
</dbReference>
<dbReference type="RefSeq" id="WP_000529340.1">
    <property type="nucleotide sequence ID" value="NC_011274.1"/>
</dbReference>
<dbReference type="SMR" id="B5RB93"/>
<dbReference type="CAZy" id="GH3">
    <property type="family name" value="Glycoside Hydrolase Family 3"/>
</dbReference>
<dbReference type="KEGG" id="seg:SG1913"/>
<dbReference type="HOGENOM" id="CLU_008392_0_0_6"/>
<dbReference type="UniPathway" id="UPA00544"/>
<dbReference type="Proteomes" id="UP000008321">
    <property type="component" value="Chromosome"/>
</dbReference>
<dbReference type="GO" id="GO:0005737">
    <property type="term" value="C:cytoplasm"/>
    <property type="evidence" value="ECO:0007669"/>
    <property type="project" value="UniProtKB-SubCell"/>
</dbReference>
<dbReference type="GO" id="GO:0004563">
    <property type="term" value="F:beta-N-acetylhexosaminidase activity"/>
    <property type="evidence" value="ECO:0007669"/>
    <property type="project" value="UniProtKB-UniRule"/>
</dbReference>
<dbReference type="GO" id="GO:0005975">
    <property type="term" value="P:carbohydrate metabolic process"/>
    <property type="evidence" value="ECO:0007669"/>
    <property type="project" value="InterPro"/>
</dbReference>
<dbReference type="GO" id="GO:0051301">
    <property type="term" value="P:cell division"/>
    <property type="evidence" value="ECO:0007669"/>
    <property type="project" value="UniProtKB-KW"/>
</dbReference>
<dbReference type="GO" id="GO:0071555">
    <property type="term" value="P:cell wall organization"/>
    <property type="evidence" value="ECO:0007669"/>
    <property type="project" value="UniProtKB-KW"/>
</dbReference>
<dbReference type="GO" id="GO:0009252">
    <property type="term" value="P:peptidoglycan biosynthetic process"/>
    <property type="evidence" value="ECO:0007669"/>
    <property type="project" value="UniProtKB-KW"/>
</dbReference>
<dbReference type="GO" id="GO:0009254">
    <property type="term" value="P:peptidoglycan turnover"/>
    <property type="evidence" value="ECO:0007669"/>
    <property type="project" value="UniProtKB-UniRule"/>
</dbReference>
<dbReference type="GO" id="GO:0008360">
    <property type="term" value="P:regulation of cell shape"/>
    <property type="evidence" value="ECO:0007669"/>
    <property type="project" value="UniProtKB-KW"/>
</dbReference>
<dbReference type="FunFam" id="3.20.20.300:FF:000001">
    <property type="entry name" value="Beta-hexosaminidase"/>
    <property type="match status" value="1"/>
</dbReference>
<dbReference type="Gene3D" id="3.20.20.300">
    <property type="entry name" value="Glycoside hydrolase, family 3, N-terminal domain"/>
    <property type="match status" value="1"/>
</dbReference>
<dbReference type="HAMAP" id="MF_00364">
    <property type="entry name" value="NagZ"/>
    <property type="match status" value="1"/>
</dbReference>
<dbReference type="InterPro" id="IPR022956">
    <property type="entry name" value="Beta_hexosaminidase_bac"/>
</dbReference>
<dbReference type="InterPro" id="IPR019800">
    <property type="entry name" value="Glyco_hydro_3_AS"/>
</dbReference>
<dbReference type="InterPro" id="IPR001764">
    <property type="entry name" value="Glyco_hydro_3_N"/>
</dbReference>
<dbReference type="InterPro" id="IPR036962">
    <property type="entry name" value="Glyco_hydro_3_N_sf"/>
</dbReference>
<dbReference type="InterPro" id="IPR017853">
    <property type="entry name" value="Glycoside_hydrolase_SF"/>
</dbReference>
<dbReference type="InterPro" id="IPR050226">
    <property type="entry name" value="NagZ_Beta-hexosaminidase"/>
</dbReference>
<dbReference type="NCBIfam" id="NF003740">
    <property type="entry name" value="PRK05337.1"/>
    <property type="match status" value="1"/>
</dbReference>
<dbReference type="PANTHER" id="PTHR30480:SF13">
    <property type="entry name" value="BETA-HEXOSAMINIDASE"/>
    <property type="match status" value="1"/>
</dbReference>
<dbReference type="PANTHER" id="PTHR30480">
    <property type="entry name" value="BETA-HEXOSAMINIDASE-RELATED"/>
    <property type="match status" value="1"/>
</dbReference>
<dbReference type="Pfam" id="PF00933">
    <property type="entry name" value="Glyco_hydro_3"/>
    <property type="match status" value="1"/>
</dbReference>
<dbReference type="SUPFAM" id="SSF51445">
    <property type="entry name" value="(Trans)glycosidases"/>
    <property type="match status" value="1"/>
</dbReference>
<dbReference type="PROSITE" id="PS00775">
    <property type="entry name" value="GLYCOSYL_HYDROL_F3"/>
    <property type="match status" value="1"/>
</dbReference>
<comment type="function">
    <text evidence="1">Plays a role in peptidoglycan recycling by cleaving the terminal beta-1,4-linked N-acetylglucosamine (GlcNAc) from peptide-linked peptidoglycan fragments, giving rise to free GlcNAc, anhydro-N-acetylmuramic acid and anhydro-N-acetylmuramic acid-linked peptides.</text>
</comment>
<comment type="catalytic activity">
    <reaction evidence="1">
        <text>Hydrolysis of terminal non-reducing N-acetyl-D-hexosamine residues in N-acetyl-beta-D-hexosaminides.</text>
        <dbReference type="EC" id="3.2.1.52"/>
    </reaction>
</comment>
<comment type="pathway">
    <text evidence="1">Cell wall biogenesis; peptidoglycan recycling.</text>
</comment>
<comment type="subcellular location">
    <subcellularLocation>
        <location evidence="1">Cytoplasm</location>
    </subcellularLocation>
</comment>
<comment type="similarity">
    <text evidence="1">Belongs to the glycosyl hydrolase 3 family. NagZ subfamily.</text>
</comment>
<protein>
    <recommendedName>
        <fullName evidence="1">Beta-hexosaminidase</fullName>
        <ecNumber evidence="1">3.2.1.52</ecNumber>
    </recommendedName>
    <alternativeName>
        <fullName evidence="1">Beta-N-acetylhexosaminidase</fullName>
    </alternativeName>
    <alternativeName>
        <fullName evidence="1">N-acetyl-beta-glucosaminidase</fullName>
    </alternativeName>
</protein>
<gene>
    <name evidence="1" type="primary">nagZ</name>
    <name type="ordered locus">SG1913</name>
</gene>